<protein>
    <recommendedName>
        <fullName evidence="1">Peptide deformylase 1</fullName>
        <shortName evidence="1">PDF 1</shortName>
        <ecNumber evidence="1">3.5.1.88</ecNumber>
    </recommendedName>
    <alternativeName>
        <fullName evidence="1">Polypeptide deformylase 1</fullName>
    </alternativeName>
</protein>
<comment type="function">
    <text evidence="1">Removes the formyl group from the N-terminal Met of newly synthesized proteins. Requires at least a dipeptide for an efficient rate of reaction. N-terminal L-methionine is a prerequisite for activity but the enzyme has broad specificity at other positions.</text>
</comment>
<comment type="catalytic activity">
    <reaction evidence="1">
        <text>N-terminal N-formyl-L-methionyl-[peptide] + H2O = N-terminal L-methionyl-[peptide] + formate</text>
        <dbReference type="Rhea" id="RHEA:24420"/>
        <dbReference type="Rhea" id="RHEA-COMP:10639"/>
        <dbReference type="Rhea" id="RHEA-COMP:10640"/>
        <dbReference type="ChEBI" id="CHEBI:15377"/>
        <dbReference type="ChEBI" id="CHEBI:15740"/>
        <dbReference type="ChEBI" id="CHEBI:49298"/>
        <dbReference type="ChEBI" id="CHEBI:64731"/>
        <dbReference type="EC" id="3.5.1.88"/>
    </reaction>
</comment>
<comment type="cofactor">
    <cofactor evidence="1">
        <name>Fe(2+)</name>
        <dbReference type="ChEBI" id="CHEBI:29033"/>
    </cofactor>
    <text evidence="1">Binds 1 Fe(2+) ion.</text>
</comment>
<comment type="similarity">
    <text evidence="1">Belongs to the polypeptide deformylase family.</text>
</comment>
<proteinExistence type="inferred from homology"/>
<gene>
    <name evidence="1" type="primary">def1</name>
    <name type="ordered locus">SO_0032</name>
</gene>
<sequence length="168" mass="19247">MALLKVLRFPDERLRTQATPITEFNAELQTQIDDMFETMYQEKGIGLAATQVDYHKQLIVMDLQDEVERPKVFINPEIIASSGDFCNEEGCLSVPGIYAKVDRAEFVTVKALDRHGNEFTVEADDLFAICIQHEMDHLKGKLFVDYLSPLKRQRIKQKLEKAAKQDAK</sequence>
<dbReference type="EC" id="3.5.1.88" evidence="1"/>
<dbReference type="EMBL" id="AE014299">
    <property type="protein sequence ID" value="AAN53119.1"/>
    <property type="molecule type" value="Genomic_DNA"/>
</dbReference>
<dbReference type="RefSeq" id="NP_715674.1">
    <property type="nucleotide sequence ID" value="NC_004347.2"/>
</dbReference>
<dbReference type="RefSeq" id="WP_011070448.1">
    <property type="nucleotide sequence ID" value="NC_004347.2"/>
</dbReference>
<dbReference type="SMR" id="Q8EKQ8"/>
<dbReference type="STRING" id="211586.SO_0032"/>
<dbReference type="PaxDb" id="211586-SO_0032"/>
<dbReference type="KEGG" id="son:SO_0032"/>
<dbReference type="PATRIC" id="fig|211586.12.peg.32"/>
<dbReference type="eggNOG" id="COG0242">
    <property type="taxonomic scope" value="Bacteria"/>
</dbReference>
<dbReference type="HOGENOM" id="CLU_061901_2_1_6"/>
<dbReference type="OrthoDB" id="9804313at2"/>
<dbReference type="PhylomeDB" id="Q8EKQ8"/>
<dbReference type="BioCyc" id="SONE211586:G1GMP-32-MONOMER"/>
<dbReference type="Proteomes" id="UP000008186">
    <property type="component" value="Chromosome"/>
</dbReference>
<dbReference type="GO" id="GO:0046872">
    <property type="term" value="F:metal ion binding"/>
    <property type="evidence" value="ECO:0007669"/>
    <property type="project" value="UniProtKB-KW"/>
</dbReference>
<dbReference type="GO" id="GO:0042586">
    <property type="term" value="F:peptide deformylase activity"/>
    <property type="evidence" value="ECO:0000318"/>
    <property type="project" value="GO_Central"/>
</dbReference>
<dbReference type="GO" id="GO:0043686">
    <property type="term" value="P:co-translational protein modification"/>
    <property type="evidence" value="ECO:0000318"/>
    <property type="project" value="GO_Central"/>
</dbReference>
<dbReference type="GO" id="GO:0006412">
    <property type="term" value="P:translation"/>
    <property type="evidence" value="ECO:0007669"/>
    <property type="project" value="UniProtKB-UniRule"/>
</dbReference>
<dbReference type="CDD" id="cd00487">
    <property type="entry name" value="Pep_deformylase"/>
    <property type="match status" value="1"/>
</dbReference>
<dbReference type="FunFam" id="3.90.45.10:FF:000001">
    <property type="entry name" value="Peptide deformylase"/>
    <property type="match status" value="1"/>
</dbReference>
<dbReference type="Gene3D" id="3.90.45.10">
    <property type="entry name" value="Peptide deformylase"/>
    <property type="match status" value="1"/>
</dbReference>
<dbReference type="HAMAP" id="MF_00163">
    <property type="entry name" value="Pep_deformylase"/>
    <property type="match status" value="1"/>
</dbReference>
<dbReference type="InterPro" id="IPR023635">
    <property type="entry name" value="Peptide_deformylase"/>
</dbReference>
<dbReference type="InterPro" id="IPR036821">
    <property type="entry name" value="Peptide_deformylase_sf"/>
</dbReference>
<dbReference type="NCBIfam" id="TIGR00079">
    <property type="entry name" value="pept_deformyl"/>
    <property type="match status" value="1"/>
</dbReference>
<dbReference type="NCBIfam" id="NF001159">
    <property type="entry name" value="PRK00150.1-3"/>
    <property type="match status" value="1"/>
</dbReference>
<dbReference type="PANTHER" id="PTHR10458">
    <property type="entry name" value="PEPTIDE DEFORMYLASE"/>
    <property type="match status" value="1"/>
</dbReference>
<dbReference type="PANTHER" id="PTHR10458:SF21">
    <property type="entry name" value="PEPTIDE DEFORMYLASE"/>
    <property type="match status" value="1"/>
</dbReference>
<dbReference type="Pfam" id="PF01327">
    <property type="entry name" value="Pep_deformylase"/>
    <property type="match status" value="1"/>
</dbReference>
<dbReference type="PIRSF" id="PIRSF004749">
    <property type="entry name" value="Pep_def"/>
    <property type="match status" value="1"/>
</dbReference>
<dbReference type="PRINTS" id="PR01576">
    <property type="entry name" value="PDEFORMYLASE"/>
</dbReference>
<dbReference type="SUPFAM" id="SSF56420">
    <property type="entry name" value="Peptide deformylase"/>
    <property type="match status" value="1"/>
</dbReference>
<reference key="1">
    <citation type="journal article" date="2002" name="Nat. Biotechnol.">
        <title>Genome sequence of the dissimilatory metal ion-reducing bacterium Shewanella oneidensis.</title>
        <authorList>
            <person name="Heidelberg J.F."/>
            <person name="Paulsen I.T."/>
            <person name="Nelson K.E."/>
            <person name="Gaidos E.J."/>
            <person name="Nelson W.C."/>
            <person name="Read T.D."/>
            <person name="Eisen J.A."/>
            <person name="Seshadri R."/>
            <person name="Ward N.L."/>
            <person name="Methe B.A."/>
            <person name="Clayton R.A."/>
            <person name="Meyer T."/>
            <person name="Tsapin A."/>
            <person name="Scott J."/>
            <person name="Beanan M.J."/>
            <person name="Brinkac L.M."/>
            <person name="Daugherty S.C."/>
            <person name="DeBoy R.T."/>
            <person name="Dodson R.J."/>
            <person name="Durkin A.S."/>
            <person name="Haft D.H."/>
            <person name="Kolonay J.F."/>
            <person name="Madupu R."/>
            <person name="Peterson J.D."/>
            <person name="Umayam L.A."/>
            <person name="White O."/>
            <person name="Wolf A.M."/>
            <person name="Vamathevan J.J."/>
            <person name="Weidman J.F."/>
            <person name="Impraim M."/>
            <person name="Lee K."/>
            <person name="Berry K.J."/>
            <person name="Lee C."/>
            <person name="Mueller J."/>
            <person name="Khouri H.M."/>
            <person name="Gill J."/>
            <person name="Utterback T.R."/>
            <person name="McDonald L.A."/>
            <person name="Feldblyum T.V."/>
            <person name="Smith H.O."/>
            <person name="Venter J.C."/>
            <person name="Nealson K.H."/>
            <person name="Fraser C.M."/>
        </authorList>
    </citation>
    <scope>NUCLEOTIDE SEQUENCE [LARGE SCALE GENOMIC DNA]</scope>
    <source>
        <strain>ATCC 700550 / JCM 31522 / CIP 106686 / LMG 19005 / NCIMB 14063 / MR-1</strain>
    </source>
</reference>
<organism>
    <name type="scientific">Shewanella oneidensis (strain ATCC 700550 / JCM 31522 / CIP 106686 / LMG 19005 / NCIMB 14063 / MR-1)</name>
    <dbReference type="NCBI Taxonomy" id="211586"/>
    <lineage>
        <taxon>Bacteria</taxon>
        <taxon>Pseudomonadati</taxon>
        <taxon>Pseudomonadota</taxon>
        <taxon>Gammaproteobacteria</taxon>
        <taxon>Alteromonadales</taxon>
        <taxon>Shewanellaceae</taxon>
        <taxon>Shewanella</taxon>
    </lineage>
</organism>
<feature type="chain" id="PRO_0000082834" description="Peptide deformylase 1">
    <location>
        <begin position="1"/>
        <end position="168"/>
    </location>
</feature>
<feature type="active site" evidence="1">
    <location>
        <position position="134"/>
    </location>
</feature>
<feature type="binding site" evidence="1">
    <location>
        <position position="91"/>
    </location>
    <ligand>
        <name>Fe cation</name>
        <dbReference type="ChEBI" id="CHEBI:24875"/>
    </ligand>
</feature>
<feature type="binding site" evidence="1">
    <location>
        <position position="133"/>
    </location>
    <ligand>
        <name>Fe cation</name>
        <dbReference type="ChEBI" id="CHEBI:24875"/>
    </ligand>
</feature>
<feature type="binding site" evidence="1">
    <location>
        <position position="137"/>
    </location>
    <ligand>
        <name>Fe cation</name>
        <dbReference type="ChEBI" id="CHEBI:24875"/>
    </ligand>
</feature>
<accession>Q8EKQ8</accession>
<evidence type="ECO:0000255" key="1">
    <source>
        <dbReference type="HAMAP-Rule" id="MF_00163"/>
    </source>
</evidence>
<name>DEF1_SHEON</name>
<keyword id="KW-0378">Hydrolase</keyword>
<keyword id="KW-0408">Iron</keyword>
<keyword id="KW-0479">Metal-binding</keyword>
<keyword id="KW-0648">Protein biosynthesis</keyword>
<keyword id="KW-1185">Reference proteome</keyword>